<reference key="1">
    <citation type="journal article" date="2005" name="J. Infect. Dis.">
        <title>Genome sequence of a serotype M28 strain of group A Streptococcus: potential new insights into puerperal sepsis and bacterial disease specificity.</title>
        <authorList>
            <person name="Green N.M."/>
            <person name="Zhang S."/>
            <person name="Porcella S.F."/>
            <person name="Nagiec M.J."/>
            <person name="Barbian K.D."/>
            <person name="Beres S.B."/>
            <person name="Lefebvre R.B."/>
            <person name="Musser J.M."/>
        </authorList>
    </citation>
    <scope>NUCLEOTIDE SEQUENCE [LARGE SCALE GENOMIC DNA]</scope>
    <source>
        <strain>MGAS6180</strain>
    </source>
</reference>
<evidence type="ECO:0000255" key="1">
    <source>
        <dbReference type="HAMAP-Rule" id="MF_00255"/>
    </source>
</evidence>
<sequence length="679" mass="75073">MSKNLLIELGLEELPAYVVTPSEKQLGERLATFLTENRLSFEDIQTFSTPRRLAVRVSGLADQQTDLTEDFKGPAKKIALDADGNFSKAAQGFVRGKGLTTDAIEFREVKGEEYVYVTKHEAGKPAKEVLLGVTEVLSAMTFPVSMHWANNSFEYIRPVHTLTVLLNDEALELDFLDIHSGRVSRGHRFLGTETTITSADSYEADLRSQCVIVDAKERQEMIVEQIKTLEVEQGVQVDIDEDLLNEVLNLVEFPTAFMGNFEAKYLDVPEEVLVTSMKNHQRYFVVRDQAGHLMPNFVSVRNGNDQAIENVIKGNEKVLVARLEDGEFFWREDQKLQIADLVAKLTNVTFHEKIGSLAEHMDRTRVIAASLAKEANLSAEEVTAVDRAAQIYKFDLLTGMVGEFDELQGIMGEKYALLAGEDAAVATAIREHYLPDAAGGALPETKVGAVLALADKLDTLLSFFSVGLIPSGSNDPYALRRATQGIVRILDHFGWRIPMDKLVDSLYDLSFDSLTYTNKADVMNFIRARVDKMMGKAAPKDIREAILASSTFVVPEMLAVAEALVKASHTENYKPAVESLSRAFNLAEKADASVQVDPSLFENEQENTLFAAIQGLTLAGSAAQQLEQVFALSPVINDFFDNTMVMAEDQALKNNRVAILSDLVSKAKTIAAFNQLNTK</sequence>
<feature type="chain" id="PRO_1000101355" description="Glycine--tRNA ligase beta subunit">
    <location>
        <begin position="1"/>
        <end position="679"/>
    </location>
</feature>
<protein>
    <recommendedName>
        <fullName evidence="1">Glycine--tRNA ligase beta subunit</fullName>
        <ecNumber evidence="1">6.1.1.14</ecNumber>
    </recommendedName>
    <alternativeName>
        <fullName evidence="1">Glycyl-tRNA synthetase beta subunit</fullName>
        <shortName evidence="1">GlyRS</shortName>
    </alternativeName>
</protein>
<gene>
    <name evidence="1" type="primary">glyS</name>
    <name type="ordered locus">M28_Spy1427</name>
</gene>
<comment type="catalytic activity">
    <reaction evidence="1">
        <text>tRNA(Gly) + glycine + ATP = glycyl-tRNA(Gly) + AMP + diphosphate</text>
        <dbReference type="Rhea" id="RHEA:16013"/>
        <dbReference type="Rhea" id="RHEA-COMP:9664"/>
        <dbReference type="Rhea" id="RHEA-COMP:9683"/>
        <dbReference type="ChEBI" id="CHEBI:30616"/>
        <dbReference type="ChEBI" id="CHEBI:33019"/>
        <dbReference type="ChEBI" id="CHEBI:57305"/>
        <dbReference type="ChEBI" id="CHEBI:78442"/>
        <dbReference type="ChEBI" id="CHEBI:78522"/>
        <dbReference type="ChEBI" id="CHEBI:456215"/>
        <dbReference type="EC" id="6.1.1.14"/>
    </reaction>
</comment>
<comment type="subunit">
    <text evidence="1">Tetramer of two alpha and two beta subunits.</text>
</comment>
<comment type="subcellular location">
    <subcellularLocation>
        <location evidence="1">Cytoplasm</location>
    </subcellularLocation>
</comment>
<comment type="similarity">
    <text evidence="1">Belongs to the class-II aminoacyl-tRNA synthetase family.</text>
</comment>
<name>SYGB_STRPM</name>
<organism>
    <name type="scientific">Streptococcus pyogenes serotype M28 (strain MGAS6180)</name>
    <dbReference type="NCBI Taxonomy" id="319701"/>
    <lineage>
        <taxon>Bacteria</taxon>
        <taxon>Bacillati</taxon>
        <taxon>Bacillota</taxon>
        <taxon>Bacilli</taxon>
        <taxon>Lactobacillales</taxon>
        <taxon>Streptococcaceae</taxon>
        <taxon>Streptococcus</taxon>
    </lineage>
</organism>
<proteinExistence type="inferred from homology"/>
<dbReference type="EC" id="6.1.1.14" evidence="1"/>
<dbReference type="EMBL" id="CP000056">
    <property type="protein sequence ID" value="AAX72537.1"/>
    <property type="molecule type" value="Genomic_DNA"/>
</dbReference>
<dbReference type="RefSeq" id="WP_011285069.1">
    <property type="nucleotide sequence ID" value="NC_007296.2"/>
</dbReference>
<dbReference type="SMR" id="Q48RX3"/>
<dbReference type="KEGG" id="spb:M28_Spy1427"/>
<dbReference type="HOGENOM" id="CLU_007220_2_2_9"/>
<dbReference type="GO" id="GO:0005829">
    <property type="term" value="C:cytosol"/>
    <property type="evidence" value="ECO:0007669"/>
    <property type="project" value="TreeGrafter"/>
</dbReference>
<dbReference type="GO" id="GO:0005524">
    <property type="term" value="F:ATP binding"/>
    <property type="evidence" value="ECO:0007669"/>
    <property type="project" value="UniProtKB-UniRule"/>
</dbReference>
<dbReference type="GO" id="GO:0004820">
    <property type="term" value="F:glycine-tRNA ligase activity"/>
    <property type="evidence" value="ECO:0007669"/>
    <property type="project" value="UniProtKB-UniRule"/>
</dbReference>
<dbReference type="GO" id="GO:0006426">
    <property type="term" value="P:glycyl-tRNA aminoacylation"/>
    <property type="evidence" value="ECO:0007669"/>
    <property type="project" value="UniProtKB-UniRule"/>
</dbReference>
<dbReference type="HAMAP" id="MF_00255">
    <property type="entry name" value="Gly_tRNA_synth_beta"/>
    <property type="match status" value="1"/>
</dbReference>
<dbReference type="InterPro" id="IPR015944">
    <property type="entry name" value="Gly-tRNA-synth_bsu"/>
</dbReference>
<dbReference type="InterPro" id="IPR006194">
    <property type="entry name" value="Gly-tRNA-synth_heterodimer"/>
</dbReference>
<dbReference type="NCBIfam" id="TIGR00211">
    <property type="entry name" value="glyS"/>
    <property type="match status" value="1"/>
</dbReference>
<dbReference type="PANTHER" id="PTHR30075:SF2">
    <property type="entry name" value="GLYCINE--TRNA LIGASE, CHLOROPLASTIC_MITOCHONDRIAL 2"/>
    <property type="match status" value="1"/>
</dbReference>
<dbReference type="PANTHER" id="PTHR30075">
    <property type="entry name" value="GLYCYL-TRNA SYNTHETASE"/>
    <property type="match status" value="1"/>
</dbReference>
<dbReference type="Pfam" id="PF02092">
    <property type="entry name" value="tRNA_synt_2f"/>
    <property type="match status" value="1"/>
</dbReference>
<dbReference type="PRINTS" id="PR01045">
    <property type="entry name" value="TRNASYNTHGB"/>
</dbReference>
<dbReference type="SUPFAM" id="SSF109604">
    <property type="entry name" value="HD-domain/PDEase-like"/>
    <property type="match status" value="1"/>
</dbReference>
<dbReference type="PROSITE" id="PS50861">
    <property type="entry name" value="AA_TRNA_LIGASE_II_GLYAB"/>
    <property type="match status" value="1"/>
</dbReference>
<accession>Q48RX3</accession>
<keyword id="KW-0030">Aminoacyl-tRNA synthetase</keyword>
<keyword id="KW-0067">ATP-binding</keyword>
<keyword id="KW-0963">Cytoplasm</keyword>
<keyword id="KW-0436">Ligase</keyword>
<keyword id="KW-0547">Nucleotide-binding</keyword>
<keyword id="KW-0648">Protein biosynthesis</keyword>